<evidence type="ECO:0000255" key="1">
    <source>
        <dbReference type="PROSITE-ProRule" id="PRU00159"/>
    </source>
</evidence>
<evidence type="ECO:0000255" key="2">
    <source>
        <dbReference type="PROSITE-ProRule" id="PRU10027"/>
    </source>
</evidence>
<evidence type="ECO:0000256" key="3">
    <source>
        <dbReference type="SAM" id="MobiDB-lite"/>
    </source>
</evidence>
<comment type="function">
    <text>Controls entry of the cell into the asexual developmental program. Required to repress entry into the conidiation program.</text>
</comment>
<comment type="catalytic activity">
    <reaction>
        <text>L-seryl-[protein] + ATP = O-phospho-L-seryl-[protein] + ADP + H(+)</text>
        <dbReference type="Rhea" id="RHEA:17989"/>
        <dbReference type="Rhea" id="RHEA-COMP:9863"/>
        <dbReference type="Rhea" id="RHEA-COMP:11604"/>
        <dbReference type="ChEBI" id="CHEBI:15378"/>
        <dbReference type="ChEBI" id="CHEBI:29999"/>
        <dbReference type="ChEBI" id="CHEBI:30616"/>
        <dbReference type="ChEBI" id="CHEBI:83421"/>
        <dbReference type="ChEBI" id="CHEBI:456216"/>
        <dbReference type="EC" id="2.7.11.1"/>
    </reaction>
</comment>
<comment type="catalytic activity">
    <reaction>
        <text>L-threonyl-[protein] + ATP = O-phospho-L-threonyl-[protein] + ADP + H(+)</text>
        <dbReference type="Rhea" id="RHEA:46608"/>
        <dbReference type="Rhea" id="RHEA-COMP:11060"/>
        <dbReference type="Rhea" id="RHEA-COMP:11605"/>
        <dbReference type="ChEBI" id="CHEBI:15378"/>
        <dbReference type="ChEBI" id="CHEBI:30013"/>
        <dbReference type="ChEBI" id="CHEBI:30616"/>
        <dbReference type="ChEBI" id="CHEBI:61977"/>
        <dbReference type="ChEBI" id="CHEBI:456216"/>
        <dbReference type="EC" id="2.7.11.1"/>
    </reaction>
</comment>
<comment type="similarity">
    <text evidence="1">Belongs to the protein kinase superfamily. Ser/Thr protein kinase family. KIN82 subfamily.</text>
</comment>
<proteinExistence type="inferred from homology"/>
<organism>
    <name type="scientific">Neurospora crassa (strain ATCC 24698 / 74-OR23-1A / CBS 708.71 / DSM 1257 / FGSC 987)</name>
    <dbReference type="NCBI Taxonomy" id="367110"/>
    <lineage>
        <taxon>Eukaryota</taxon>
        <taxon>Fungi</taxon>
        <taxon>Dikarya</taxon>
        <taxon>Ascomycota</taxon>
        <taxon>Pezizomycotina</taxon>
        <taxon>Sordariomycetes</taxon>
        <taxon>Sordariomycetidae</taxon>
        <taxon>Sordariales</taxon>
        <taxon>Sordariaceae</taxon>
        <taxon>Neurospora</taxon>
    </lineage>
</organism>
<name>NRC2_NEUCR</name>
<reference key="1">
    <citation type="journal article" date="1998" name="Genetics">
        <title>The isolation and characterization of nrc-1 and nrc-2, two genes encoding protein kinases that control growth and development in Neurospora crassa.</title>
        <authorList>
            <person name="Kothe G.O."/>
            <person name="Free S.J."/>
        </authorList>
    </citation>
    <scope>NUCLEOTIDE SEQUENCE [GENOMIC DNA]</scope>
</reference>
<reference key="2">
    <citation type="journal article" date="2003" name="Nucleic Acids Res.">
        <title>What's in the genome of a filamentous fungus? Analysis of the Neurospora genome sequence.</title>
        <authorList>
            <person name="Mannhaupt G."/>
            <person name="Montrone C."/>
            <person name="Haase D."/>
            <person name="Mewes H.-W."/>
            <person name="Aign V."/>
            <person name="Hoheisel J.D."/>
            <person name="Fartmann B."/>
            <person name="Nyakatura G."/>
            <person name="Kempken F."/>
            <person name="Maier J."/>
            <person name="Schulte U."/>
        </authorList>
    </citation>
    <scope>NUCLEOTIDE SEQUENCE [LARGE SCALE GENOMIC DNA]</scope>
    <source>
        <strain>ATCC 24698 / 74-OR23-1A / CBS 708.71 / DSM 1257 / FGSC 987</strain>
    </source>
</reference>
<reference key="3">
    <citation type="journal article" date="2003" name="Nature">
        <title>The genome sequence of the filamentous fungus Neurospora crassa.</title>
        <authorList>
            <person name="Galagan J.E."/>
            <person name="Calvo S.E."/>
            <person name="Borkovich K.A."/>
            <person name="Selker E.U."/>
            <person name="Read N.D."/>
            <person name="Jaffe D.B."/>
            <person name="FitzHugh W."/>
            <person name="Ma L.-J."/>
            <person name="Smirnov S."/>
            <person name="Purcell S."/>
            <person name="Rehman B."/>
            <person name="Elkins T."/>
            <person name="Engels R."/>
            <person name="Wang S."/>
            <person name="Nielsen C.B."/>
            <person name="Butler J."/>
            <person name="Endrizzi M."/>
            <person name="Qui D."/>
            <person name="Ianakiev P."/>
            <person name="Bell-Pedersen D."/>
            <person name="Nelson M.A."/>
            <person name="Werner-Washburne M."/>
            <person name="Selitrennikoff C.P."/>
            <person name="Kinsey J.A."/>
            <person name="Braun E.L."/>
            <person name="Zelter A."/>
            <person name="Schulte U."/>
            <person name="Kothe G.O."/>
            <person name="Jedd G."/>
            <person name="Mewes H.-W."/>
            <person name="Staben C."/>
            <person name="Marcotte E."/>
            <person name="Greenberg D."/>
            <person name="Roy A."/>
            <person name="Foley K."/>
            <person name="Naylor J."/>
            <person name="Stange-Thomann N."/>
            <person name="Barrett R."/>
            <person name="Gnerre S."/>
            <person name="Kamal M."/>
            <person name="Kamvysselis M."/>
            <person name="Mauceli E.W."/>
            <person name="Bielke C."/>
            <person name="Rudd S."/>
            <person name="Frishman D."/>
            <person name="Krystofova S."/>
            <person name="Rasmussen C."/>
            <person name="Metzenberg R.L."/>
            <person name="Perkins D.D."/>
            <person name="Kroken S."/>
            <person name="Cogoni C."/>
            <person name="Macino G."/>
            <person name="Catcheside D.E.A."/>
            <person name="Li W."/>
            <person name="Pratt R.J."/>
            <person name="Osmani S.A."/>
            <person name="DeSouza C.P.C."/>
            <person name="Glass N.L."/>
            <person name="Orbach M.J."/>
            <person name="Berglund J.A."/>
            <person name="Voelker R."/>
            <person name="Yarden O."/>
            <person name="Plamann M."/>
            <person name="Seiler S."/>
            <person name="Dunlap J.C."/>
            <person name="Radford A."/>
            <person name="Aramayo R."/>
            <person name="Natvig D.O."/>
            <person name="Alex L.A."/>
            <person name="Mannhaupt G."/>
            <person name="Ebbole D.J."/>
            <person name="Freitag M."/>
            <person name="Paulsen I."/>
            <person name="Sachs M.S."/>
            <person name="Lander E.S."/>
            <person name="Nusbaum C."/>
            <person name="Birren B.W."/>
        </authorList>
    </citation>
    <scope>NUCLEOTIDE SEQUENCE [LARGE SCALE GENOMIC DNA]</scope>
    <source>
        <strain>ATCC 24698 / 74-OR23-1A / CBS 708.71 / DSM 1257 / FGSC 987</strain>
    </source>
</reference>
<gene>
    <name type="primary">nrc-2</name>
    <name type="ORF">B1K11.130</name>
    <name type="ORF">NCU01797</name>
</gene>
<feature type="chain" id="PRO_0000086446" description="Serine/threonine-protein kinase nrc-2">
    <location>
        <begin position="1"/>
        <end position="623"/>
    </location>
</feature>
<feature type="domain" description="Protein kinase" evidence="1">
    <location>
        <begin position="242"/>
        <end position="532"/>
    </location>
</feature>
<feature type="region of interest" description="Disordered" evidence="3">
    <location>
        <begin position="1"/>
        <end position="215"/>
    </location>
</feature>
<feature type="region of interest" description="Disordered" evidence="3">
    <location>
        <begin position="569"/>
        <end position="596"/>
    </location>
</feature>
<feature type="compositionally biased region" description="Basic and acidic residues" evidence="3">
    <location>
        <begin position="27"/>
        <end position="36"/>
    </location>
</feature>
<feature type="compositionally biased region" description="Basic and acidic residues" evidence="3">
    <location>
        <begin position="170"/>
        <end position="180"/>
    </location>
</feature>
<feature type="compositionally biased region" description="Low complexity" evidence="3">
    <location>
        <begin position="199"/>
        <end position="209"/>
    </location>
</feature>
<feature type="active site" description="Proton acceptor" evidence="1 2">
    <location>
        <position position="367"/>
    </location>
</feature>
<feature type="binding site" evidence="1">
    <location>
        <begin position="248"/>
        <end position="256"/>
    </location>
    <ligand>
        <name>ATP</name>
        <dbReference type="ChEBI" id="CHEBI:30616"/>
    </ligand>
</feature>
<feature type="binding site" evidence="1">
    <location>
        <position position="271"/>
    </location>
    <ligand>
        <name>ATP</name>
        <dbReference type="ChEBI" id="CHEBI:30616"/>
    </ligand>
</feature>
<dbReference type="EC" id="2.7.11.1"/>
<dbReference type="EMBL" id="AF034260">
    <property type="protein sequence ID" value="AAC21677.1"/>
    <property type="molecule type" value="Genomic_DNA"/>
</dbReference>
<dbReference type="EMBL" id="AL669998">
    <property type="protein sequence ID" value="CAD21180.1"/>
    <property type="molecule type" value="Genomic_DNA"/>
</dbReference>
<dbReference type="EMBL" id="CM002237">
    <property type="protein sequence ID" value="EAA27239.1"/>
    <property type="molecule type" value="Genomic_DNA"/>
</dbReference>
<dbReference type="RefSeq" id="XP_956475.1">
    <property type="nucleotide sequence ID" value="XM_951382.2"/>
</dbReference>
<dbReference type="SMR" id="O42626"/>
<dbReference type="FunCoup" id="O42626">
    <property type="interactions" value="189"/>
</dbReference>
<dbReference type="STRING" id="367110.O42626"/>
<dbReference type="PaxDb" id="5141-EFNCRP00000001908"/>
<dbReference type="EnsemblFungi" id="EAA27239">
    <property type="protein sequence ID" value="EAA27239"/>
    <property type="gene ID" value="NCU01797"/>
</dbReference>
<dbReference type="GeneID" id="3872624"/>
<dbReference type="KEGG" id="ncr:NCU01797"/>
<dbReference type="VEuPathDB" id="FungiDB:NCU01797"/>
<dbReference type="HOGENOM" id="CLU_000288_84_4_1"/>
<dbReference type="InParanoid" id="O42626"/>
<dbReference type="OrthoDB" id="432483at2759"/>
<dbReference type="BRENDA" id="2.7.11.1">
    <property type="organism ID" value="3627"/>
</dbReference>
<dbReference type="Proteomes" id="UP000001805">
    <property type="component" value="Chromosome 6, Linkage Group II"/>
</dbReference>
<dbReference type="GO" id="GO:0005737">
    <property type="term" value="C:cytoplasm"/>
    <property type="evidence" value="ECO:0000318"/>
    <property type="project" value="GO_Central"/>
</dbReference>
<dbReference type="GO" id="GO:0005634">
    <property type="term" value="C:nucleus"/>
    <property type="evidence" value="ECO:0000318"/>
    <property type="project" value="GO_Central"/>
</dbReference>
<dbReference type="GO" id="GO:0005886">
    <property type="term" value="C:plasma membrane"/>
    <property type="evidence" value="ECO:0000318"/>
    <property type="project" value="GO_Central"/>
</dbReference>
<dbReference type="GO" id="GO:0005524">
    <property type="term" value="F:ATP binding"/>
    <property type="evidence" value="ECO:0007669"/>
    <property type="project" value="UniProtKB-KW"/>
</dbReference>
<dbReference type="GO" id="GO:0106310">
    <property type="term" value="F:protein serine kinase activity"/>
    <property type="evidence" value="ECO:0007669"/>
    <property type="project" value="RHEA"/>
</dbReference>
<dbReference type="GO" id="GO:0004674">
    <property type="term" value="F:protein serine/threonine kinase activity"/>
    <property type="evidence" value="ECO:0000318"/>
    <property type="project" value="GO_Central"/>
</dbReference>
<dbReference type="GO" id="GO:0048315">
    <property type="term" value="P:conidium formation"/>
    <property type="evidence" value="ECO:0007669"/>
    <property type="project" value="UniProtKB-KW"/>
</dbReference>
<dbReference type="GO" id="GO:0045332">
    <property type="term" value="P:phospholipid translocation"/>
    <property type="evidence" value="ECO:0000318"/>
    <property type="project" value="GO_Central"/>
</dbReference>
<dbReference type="GO" id="GO:0030435">
    <property type="term" value="P:sporulation resulting in formation of a cellular spore"/>
    <property type="evidence" value="ECO:0007669"/>
    <property type="project" value="UniProtKB-KW"/>
</dbReference>
<dbReference type="CDD" id="cd05574">
    <property type="entry name" value="STKc_phototropin_like"/>
    <property type="match status" value="1"/>
</dbReference>
<dbReference type="FunFam" id="1.10.510.10:FF:000121">
    <property type="entry name" value="Serine/threonine-protein kinase nrc-2"/>
    <property type="match status" value="1"/>
</dbReference>
<dbReference type="FunFam" id="3.30.200.20:FF:000078">
    <property type="entry name" value="Serine/threonine-protein kinase nrc-2"/>
    <property type="match status" value="1"/>
</dbReference>
<dbReference type="Gene3D" id="3.30.200.20">
    <property type="entry name" value="Phosphorylase Kinase, domain 1"/>
    <property type="match status" value="1"/>
</dbReference>
<dbReference type="Gene3D" id="1.10.510.10">
    <property type="entry name" value="Transferase(Phosphotransferase) domain 1"/>
    <property type="match status" value="1"/>
</dbReference>
<dbReference type="InterPro" id="IPR011009">
    <property type="entry name" value="Kinase-like_dom_sf"/>
</dbReference>
<dbReference type="InterPro" id="IPR000719">
    <property type="entry name" value="Prot_kinase_dom"/>
</dbReference>
<dbReference type="InterPro" id="IPR008271">
    <property type="entry name" value="Ser/Thr_kinase_AS"/>
</dbReference>
<dbReference type="PANTHER" id="PTHR45637">
    <property type="entry name" value="FLIPPASE KINASE 1-RELATED"/>
    <property type="match status" value="1"/>
</dbReference>
<dbReference type="Pfam" id="PF00069">
    <property type="entry name" value="Pkinase"/>
    <property type="match status" value="1"/>
</dbReference>
<dbReference type="SMART" id="SM00220">
    <property type="entry name" value="S_TKc"/>
    <property type="match status" value="1"/>
</dbReference>
<dbReference type="SUPFAM" id="SSF56112">
    <property type="entry name" value="Protein kinase-like (PK-like)"/>
    <property type="match status" value="1"/>
</dbReference>
<dbReference type="PROSITE" id="PS50011">
    <property type="entry name" value="PROTEIN_KINASE_DOM"/>
    <property type="match status" value="1"/>
</dbReference>
<dbReference type="PROSITE" id="PS00108">
    <property type="entry name" value="PROTEIN_KINASE_ST"/>
    <property type="match status" value="1"/>
</dbReference>
<keyword id="KW-0067">ATP-binding</keyword>
<keyword id="KW-0183">Conidiation</keyword>
<keyword id="KW-0418">Kinase</keyword>
<keyword id="KW-0547">Nucleotide-binding</keyword>
<keyword id="KW-1185">Reference proteome</keyword>
<keyword id="KW-0723">Serine/threonine-protein kinase</keyword>
<keyword id="KW-0749">Sporulation</keyword>
<keyword id="KW-0808">Transferase</keyword>
<sequence length="623" mass="68628">MPSTKNANGEGHFPSRIKQFFRINSGSKDHKDRDAHTTSSSHGGAPRADAKTPSGFRQSRFFSVGRLRSTTVVSEGNPLDESMSPTAHANPYFAHQGQPGLRHHNDGSVPPSPPDTPSLKVDGPEGSQQPTAATKEELARKLRRVASAPNAQGLFSKGQGNGDRPATAELSKEPLEESKDSNTVGFAEQKPNNDSSTSLAAPDADGLGALPPPIRQSPLAFRRTYSSNSIKVRNVEVGPQSFDKIKLIGKGDVGKVYLVKEKKSGRLYAMKVLSKKEMIKRNKIKRALAEQEILATSNHPFIVTLYHSFQSEDYLYLCMEYCSGGEFFRALQTRPGKCIPEDDARFYAAEVTAALEYLHLMGFIYRDLKPENILLHQSGHIMLSDFDLSKQSDPGGKPTMIIGKNGTSTSSLPTIDTKSCIANFRTNSFVGTEEYIAPEVIKGSGHTSAVDWWTLGILIYEMLYGTTPFKGKNRNATFANILREDIPFPDHAGAPQISNLCKSLIRKLLIKDENRRLGARAGASDIKTHPFFRTTQWALIRHMKPPIVPNQGRGIDTLNFRNVKESESVDISGSRQMGLKGEPLESGMVTPGENAVDPFEEFNSVTLHHDGDEEYHSDAYEKR</sequence>
<protein>
    <recommendedName>
        <fullName>Serine/threonine-protein kinase nrc-2</fullName>
        <ecNumber>2.7.11.1</ecNumber>
    </recommendedName>
    <alternativeName>
        <fullName>Non-repressible conidiation protein 2</fullName>
    </alternativeName>
</protein>
<accession>O42626</accession>
<accession>Q7RXF2</accession>